<dbReference type="EC" id="2.1.1.53" evidence="3"/>
<dbReference type="EMBL" id="AF280402">
    <property type="protein sequence ID" value="AAK49870.1"/>
    <property type="molecule type" value="mRNA"/>
</dbReference>
<dbReference type="SMR" id="Q93XQ5"/>
<dbReference type="BRENDA" id="2.1.1.53">
    <property type="organism ID" value="9729"/>
</dbReference>
<dbReference type="UniPathway" id="UPA00107"/>
<dbReference type="GO" id="GO:0005829">
    <property type="term" value="C:cytosol"/>
    <property type="evidence" value="ECO:0007669"/>
    <property type="project" value="TreeGrafter"/>
</dbReference>
<dbReference type="GO" id="GO:0030750">
    <property type="term" value="F:putrescine N-methyltransferase activity"/>
    <property type="evidence" value="ECO:0007669"/>
    <property type="project" value="UniProtKB-EC"/>
</dbReference>
<dbReference type="GO" id="GO:0004766">
    <property type="term" value="F:spermidine synthase activity"/>
    <property type="evidence" value="ECO:0007669"/>
    <property type="project" value="TreeGrafter"/>
</dbReference>
<dbReference type="GO" id="GO:0009820">
    <property type="term" value="P:alkaloid metabolic process"/>
    <property type="evidence" value="ECO:0007669"/>
    <property type="project" value="UniProtKB-KW"/>
</dbReference>
<dbReference type="GO" id="GO:0032259">
    <property type="term" value="P:methylation"/>
    <property type="evidence" value="ECO:0007669"/>
    <property type="project" value="UniProtKB-KW"/>
</dbReference>
<dbReference type="GO" id="GO:0042179">
    <property type="term" value="P:nicotine biosynthetic process"/>
    <property type="evidence" value="ECO:0007669"/>
    <property type="project" value="UniProtKB-UniPathway"/>
</dbReference>
<dbReference type="GO" id="GO:0009625">
    <property type="term" value="P:response to insect"/>
    <property type="evidence" value="ECO:0000270"/>
    <property type="project" value="UniProtKB"/>
</dbReference>
<dbReference type="GO" id="GO:0009753">
    <property type="term" value="P:response to jasmonic acid"/>
    <property type="evidence" value="ECO:0000270"/>
    <property type="project" value="UniProtKB"/>
</dbReference>
<dbReference type="GO" id="GO:0009611">
    <property type="term" value="P:response to wounding"/>
    <property type="evidence" value="ECO:0000270"/>
    <property type="project" value="UniProtKB"/>
</dbReference>
<dbReference type="GO" id="GO:0008295">
    <property type="term" value="P:spermidine biosynthetic process"/>
    <property type="evidence" value="ECO:0007669"/>
    <property type="project" value="TreeGrafter"/>
</dbReference>
<dbReference type="CDD" id="cd02440">
    <property type="entry name" value="AdoMet_MTases"/>
    <property type="match status" value="1"/>
</dbReference>
<dbReference type="FunFam" id="2.30.140.10:FF:000001">
    <property type="entry name" value="SPE3p Spermidine synthase"/>
    <property type="match status" value="1"/>
</dbReference>
<dbReference type="FunFam" id="3.40.50.150:FF:000013">
    <property type="entry name" value="Spermidine synthase"/>
    <property type="match status" value="1"/>
</dbReference>
<dbReference type="Gene3D" id="2.30.140.10">
    <property type="entry name" value="Spermidine synthase, tetramerisation domain"/>
    <property type="match status" value="1"/>
</dbReference>
<dbReference type="Gene3D" id="3.40.50.150">
    <property type="entry name" value="Vaccinia Virus protein VP39"/>
    <property type="match status" value="1"/>
</dbReference>
<dbReference type="HAMAP" id="MF_00198">
    <property type="entry name" value="Spermidine_synth"/>
    <property type="match status" value="1"/>
</dbReference>
<dbReference type="InterPro" id="IPR030374">
    <property type="entry name" value="PABS"/>
</dbReference>
<dbReference type="InterPro" id="IPR030373">
    <property type="entry name" value="PABS_CS"/>
</dbReference>
<dbReference type="InterPro" id="IPR025803">
    <property type="entry name" value="Putrescine_N-MeTfrase"/>
</dbReference>
<dbReference type="InterPro" id="IPR029063">
    <property type="entry name" value="SAM-dependent_MTases_sf"/>
</dbReference>
<dbReference type="InterPro" id="IPR001045">
    <property type="entry name" value="Spermi_synthase"/>
</dbReference>
<dbReference type="InterPro" id="IPR035246">
    <property type="entry name" value="Spermidine_synt_N"/>
</dbReference>
<dbReference type="InterPro" id="IPR037163">
    <property type="entry name" value="Spermidine_synt_N_sf"/>
</dbReference>
<dbReference type="NCBIfam" id="NF002010">
    <property type="entry name" value="PRK00811.1"/>
    <property type="match status" value="1"/>
</dbReference>
<dbReference type="NCBIfam" id="TIGR00417">
    <property type="entry name" value="speE"/>
    <property type="match status" value="1"/>
</dbReference>
<dbReference type="PANTHER" id="PTHR11558:SF53">
    <property type="entry name" value="PUTRESCINE N-METHYLTRANSFERASE 1"/>
    <property type="match status" value="1"/>
</dbReference>
<dbReference type="PANTHER" id="PTHR11558">
    <property type="entry name" value="SPERMIDINE/SPERMINE SYNTHASE"/>
    <property type="match status" value="1"/>
</dbReference>
<dbReference type="Pfam" id="PF17284">
    <property type="entry name" value="Spermine_synt_N"/>
    <property type="match status" value="1"/>
</dbReference>
<dbReference type="Pfam" id="PF01564">
    <property type="entry name" value="Spermine_synth"/>
    <property type="match status" value="1"/>
</dbReference>
<dbReference type="SUPFAM" id="SSF53335">
    <property type="entry name" value="S-adenosyl-L-methionine-dependent methyltransferases"/>
    <property type="match status" value="1"/>
</dbReference>
<dbReference type="PROSITE" id="PS01330">
    <property type="entry name" value="PABS_1"/>
    <property type="match status" value="1"/>
</dbReference>
<dbReference type="PROSITE" id="PS51006">
    <property type="entry name" value="PABS_2"/>
    <property type="match status" value="1"/>
</dbReference>
<dbReference type="PROSITE" id="PS51615">
    <property type="entry name" value="SAM_MT_PUTRESCINE"/>
    <property type="match status" value="1"/>
</dbReference>
<name>PMT1_NICAT</name>
<sequence length="388" mass="42627">MEVISTNTNGSTIFKNGAIPMNGYQNGTSKHQNGHQNGTSEHRNGHQNGISEHQNGHKNGTSEHQNGHQNGTSEQQNGTISHDNGNELQLLGSSNSIKPGWFSEFSALWPGEAFSLKVEKLLFQGKSDYQDVMLFESATYGKVLTLDGAIQHTENGGFPYTEMIVHLPLGSIPNPKKVLIIGGGIGFTLFEMLRYPSIEKIDIVEIDDVVVDVSRKFFPYLAANFNDPRVTLVLGDGAAFVKAAQAGYYDAIIVDSSDPIGPAKDLFERPFFEAVAKALRPGGVVCTQAESIWLHMHIIKQIIANCRQVFKGSVNYAWTTVPTYPTGVIGYMLCSTEGPEVDFKNPINPIDKETTQVKSKLAPLKFYNFDIHKAAFILPSFARSMIES</sequence>
<accession>Q93XQ5</accession>
<organism>
    <name type="scientific">Nicotiana attenuata</name>
    <name type="common">Coyote tobacco</name>
    <dbReference type="NCBI Taxonomy" id="49451"/>
    <lineage>
        <taxon>Eukaryota</taxon>
        <taxon>Viridiplantae</taxon>
        <taxon>Streptophyta</taxon>
        <taxon>Embryophyta</taxon>
        <taxon>Tracheophyta</taxon>
        <taxon>Spermatophyta</taxon>
        <taxon>Magnoliopsida</taxon>
        <taxon>eudicotyledons</taxon>
        <taxon>Gunneridae</taxon>
        <taxon>Pentapetalae</taxon>
        <taxon>asterids</taxon>
        <taxon>lamiids</taxon>
        <taxon>Solanales</taxon>
        <taxon>Solanaceae</taxon>
        <taxon>Nicotianoideae</taxon>
        <taxon>Nicotianeae</taxon>
        <taxon>Nicotiana</taxon>
    </lineage>
</organism>
<feature type="chain" id="PRO_0000455796" description="Putrescine N-methyltransferase 1">
    <location>
        <begin position="1"/>
        <end position="388"/>
    </location>
</feature>
<feature type="domain" description="PABS" evidence="2">
    <location>
        <begin position="99"/>
        <end position="336"/>
    </location>
</feature>
<feature type="region of interest" description="Disordered" evidence="4">
    <location>
        <begin position="1"/>
        <end position="88"/>
    </location>
</feature>
<feature type="compositionally biased region" description="Polar residues" evidence="4">
    <location>
        <begin position="1"/>
        <end position="14"/>
    </location>
</feature>
<feature type="compositionally biased region" description="Polar residues" evidence="4">
    <location>
        <begin position="23"/>
        <end position="39"/>
    </location>
</feature>
<feature type="compositionally biased region" description="Polar residues" evidence="4">
    <location>
        <begin position="46"/>
        <end position="88"/>
    </location>
</feature>
<feature type="active site" description="Proton acceptor" evidence="2 3">
    <location>
        <position position="255"/>
    </location>
</feature>
<feature type="binding site" evidence="3">
    <location>
        <position position="130"/>
    </location>
    <ligand>
        <name>S-adenosyl-L-methionine</name>
        <dbReference type="ChEBI" id="CHEBI:59789"/>
    </ligand>
</feature>
<feature type="binding site" evidence="3">
    <location>
        <position position="205"/>
    </location>
    <ligand>
        <name>S-adenosyl-L-methionine</name>
        <dbReference type="ChEBI" id="CHEBI:59789"/>
    </ligand>
</feature>
<feature type="binding site" evidence="3">
    <location>
        <begin position="236"/>
        <end position="237"/>
    </location>
    <ligand>
        <name>S-adenosyl-L-methionine</name>
        <dbReference type="ChEBI" id="CHEBI:59789"/>
    </ligand>
</feature>
<feature type="binding site" evidence="3">
    <location>
        <position position="324"/>
    </location>
    <ligand>
        <name>S-adenosyl-L-methionine</name>
        <dbReference type="ChEBI" id="CHEBI:59789"/>
    </ligand>
</feature>
<evidence type="ECO:0000250" key="1">
    <source>
        <dbReference type="UniProtKB" id="Q42963"/>
    </source>
</evidence>
<evidence type="ECO:0000255" key="2">
    <source>
        <dbReference type="PROSITE-ProRule" id="PRU00354"/>
    </source>
</evidence>
<evidence type="ECO:0000255" key="3">
    <source>
        <dbReference type="PROSITE-ProRule" id="PRU00947"/>
    </source>
</evidence>
<evidence type="ECO:0000256" key="4">
    <source>
        <dbReference type="SAM" id="MobiDB-lite"/>
    </source>
</evidence>
<evidence type="ECO:0000269" key="5">
    <source>
    </source>
</evidence>
<evidence type="ECO:0000269" key="6">
    <source>
    </source>
</evidence>
<evidence type="ECO:0000303" key="7">
    <source>
    </source>
</evidence>
<keyword id="KW-0017">Alkaloid metabolism</keyword>
<keyword id="KW-0489">Methyltransferase</keyword>
<keyword id="KW-0620">Polyamine biosynthesis</keyword>
<keyword id="KW-0949">S-adenosyl-L-methionine</keyword>
<keyword id="KW-0808">Transferase</keyword>
<protein>
    <recommendedName>
        <fullName evidence="7">Putrescine N-methyltransferase 1</fullName>
        <shortName evidence="7">NaPMT1</shortName>
        <ecNumber evidence="3">2.1.1.53</ecNumber>
    </recommendedName>
</protein>
<proteinExistence type="evidence at transcript level"/>
<comment type="function">
    <text evidence="1">Involved in the biosynthesis of pyridine alkaloid natural products, leading mainly to the production of anabasine, anatabine, nicotine and nornicotine, effective deterrents against herbivores with antiparasitic and pesticide properties (neurotoxins); nornicotine serves as the precursor in the synthesis of the carcinogen compound N'-nitrosonornicotine (NNN) (By similarity). Methyltransferase that mediates the conversion of putrescine to N-methylputrescine (By similarity).</text>
</comment>
<comment type="catalytic activity">
    <reaction evidence="3">
        <text>putrescine + S-adenosyl-L-methionine = N-methylputrescine + S-adenosyl-L-homocysteine + H(+)</text>
        <dbReference type="Rhea" id="RHEA:15037"/>
        <dbReference type="ChEBI" id="CHEBI:15378"/>
        <dbReference type="ChEBI" id="CHEBI:57856"/>
        <dbReference type="ChEBI" id="CHEBI:58039"/>
        <dbReference type="ChEBI" id="CHEBI:59789"/>
        <dbReference type="ChEBI" id="CHEBI:326268"/>
        <dbReference type="EC" id="2.1.1.53"/>
    </reaction>
</comment>
<comment type="pathway">
    <text evidence="1">Alkaloid biosynthesis; nicotine biosynthesis.</text>
</comment>
<comment type="tissue specificity">
    <text evidence="6">Mainly expressed in roots.</text>
</comment>
<comment type="induction">
    <text evidence="5">Triggered by jasmonic acid (MeJA); this induction is repressed by 2-chloroethylphosphonic acid (ethephon), an ethylene precursor, that can by alleviated by 1-methylcyclopropene (1-MCP), a competitive inhibitor of ethylene receptors (PubMed:11299398). Accumulates upon wounding and feeding by the specialist herbivore Manduca sexta; these induction is dramatically amplified by a pretreatment with 1-MCP (PubMed:11299398).</text>
</comment>
<comment type="similarity">
    <text evidence="3">Belongs to the class I-like SAM-binding methyltransferase superfamily. Spermidine/spermine synthase family.</text>
</comment>
<reference key="1">
    <citation type="journal article" date="2001" name="Plant Physiol.">
        <title>Molecular interactions between the specialist herbivore Manduca sexta (Lepidoptera, Sphingidae) and its natural host Nicotiana attenuata. IV. Insect-Induced ethylene reduces jasmonate-induced nicotine accumulation by regulating putrescine N-methyltransferase transcripts.</title>
        <authorList>
            <person name="Winz R.A."/>
            <person name="Baldwin I.T."/>
        </authorList>
    </citation>
    <scope>NUCLEOTIDE SEQUENCE [MRNA]</scope>
    <scope>INDUCTION BY JASMONATE; WOUNDING AND MANDUCA SEXTA</scope>
    <source>
        <tissue>Root</tissue>
    </source>
</reference>
<reference key="2">
    <citation type="journal article" date="2009" name="Phytochemistry">
        <title>Putrescine N-methyltransferase--the start for alkaloids.</title>
        <authorList>
            <person name="Biastoff S."/>
            <person name="Brandt W."/>
            <person name="Draeger B."/>
        </authorList>
    </citation>
    <scope>REVIEW ON PUTRESCINE N-METHYLTRANSFERASE</scope>
</reference>
<reference key="3">
    <citation type="journal article" date="2017" name="Proc. Natl. Acad. Sci. U.S.A.">
        <title>Wild tobacco genomes reveal the evolution of nicotine biosynthesis.</title>
        <authorList>
            <person name="Xu S."/>
            <person name="Brockmoeller T."/>
            <person name="Navarro-Quezada A."/>
            <person name="Kuhl H."/>
            <person name="Gase K."/>
            <person name="Ling Z."/>
            <person name="Zhou W."/>
            <person name="Kreitzer C."/>
            <person name="Stanke M."/>
            <person name="Tang H."/>
            <person name="Lyons E."/>
            <person name="Pandey P."/>
            <person name="Pandey S.P."/>
            <person name="Timmermann B."/>
            <person name="Gaquerel E."/>
            <person name="Baldwin I.T."/>
        </authorList>
    </citation>
    <scope>TISSUE SPECIFICITY</scope>
    <scope>REVIEW ON NICOTINE BIOSYNTHESIS</scope>
</reference>
<gene>
    <name evidence="7" type="primary">PMT1</name>
</gene>